<accession>Q97BZ5</accession>
<protein>
    <recommendedName>
        <fullName evidence="1">Exosome complex component Rrp41</fullName>
        <ecNumber evidence="1">3.1.13.-</ecNumber>
    </recommendedName>
</protein>
<evidence type="ECO:0000255" key="1">
    <source>
        <dbReference type="HAMAP-Rule" id="MF_00591"/>
    </source>
</evidence>
<gene>
    <name evidence="1" type="primary">rrp41</name>
    <name type="ordered locus">TV0310</name>
    <name type="ORF">TVG0319949</name>
</gene>
<reference key="1">
    <citation type="journal article" date="2000" name="Proc. Natl. Acad. Sci. U.S.A.">
        <title>Archaeal adaptation to higher temperatures revealed by genomic sequence of Thermoplasma volcanium.</title>
        <authorList>
            <person name="Kawashima T."/>
            <person name="Amano N."/>
            <person name="Koike H."/>
            <person name="Makino S."/>
            <person name="Higuchi S."/>
            <person name="Kawashima-Ohya Y."/>
            <person name="Watanabe K."/>
            <person name="Yamazaki M."/>
            <person name="Kanehori K."/>
            <person name="Kawamoto T."/>
            <person name="Nunoshiba T."/>
            <person name="Yamamoto Y."/>
            <person name="Aramaki H."/>
            <person name="Makino K."/>
            <person name="Suzuki M."/>
        </authorList>
    </citation>
    <scope>NUCLEOTIDE SEQUENCE [LARGE SCALE GENOMIC DNA]</scope>
    <source>
        <strain>ATCC 51530 / DSM 4299 / JCM 9571 / NBRC 15438 / GSS1</strain>
    </source>
</reference>
<name>RRP41_THEVO</name>
<keyword id="KW-0963">Cytoplasm</keyword>
<keyword id="KW-0269">Exonuclease</keyword>
<keyword id="KW-0271">Exosome</keyword>
<keyword id="KW-0378">Hydrolase</keyword>
<keyword id="KW-0540">Nuclease</keyword>
<feature type="chain" id="PRO_0000139994" description="Exosome complex component Rrp41">
    <location>
        <begin position="1"/>
        <end position="248"/>
    </location>
</feature>
<comment type="function">
    <text evidence="1">Catalytic component of the exosome, which is a complex involved in RNA degradation. Has 3'-&gt;5' exoribonuclease activity. Can also synthesize heteromeric RNA-tails.</text>
</comment>
<comment type="subunit">
    <text evidence="1">Component of the archaeal exosome complex. Forms a hexameric ring-like arrangement composed of 3 Rrp41-Rrp42 heterodimers. The hexameric ring associates with a trimer of Rrp4 and/or Csl4 subunits.</text>
</comment>
<comment type="subcellular location">
    <subcellularLocation>
        <location evidence="1">Cytoplasm</location>
    </subcellularLocation>
</comment>
<comment type="similarity">
    <text evidence="1">Belongs to the RNase PH family. Rrp41 subfamily.</text>
</comment>
<dbReference type="EC" id="3.1.13.-" evidence="1"/>
<dbReference type="EMBL" id="BA000011">
    <property type="protein sequence ID" value="BAB59452.1"/>
    <property type="molecule type" value="Genomic_DNA"/>
</dbReference>
<dbReference type="SMR" id="Q97BZ5"/>
<dbReference type="STRING" id="273116.gene:9381085"/>
<dbReference type="PaxDb" id="273116-14324525"/>
<dbReference type="KEGG" id="tvo:TVG0319949"/>
<dbReference type="eggNOG" id="arCOG01575">
    <property type="taxonomic scope" value="Archaea"/>
</dbReference>
<dbReference type="HOGENOM" id="CLU_063514_0_0_2"/>
<dbReference type="OrthoDB" id="24266at2157"/>
<dbReference type="PhylomeDB" id="Q97BZ5"/>
<dbReference type="Proteomes" id="UP000001017">
    <property type="component" value="Chromosome"/>
</dbReference>
<dbReference type="GO" id="GO:0000177">
    <property type="term" value="C:cytoplasmic exosome (RNase complex)"/>
    <property type="evidence" value="ECO:0007669"/>
    <property type="project" value="TreeGrafter"/>
</dbReference>
<dbReference type="GO" id="GO:0000175">
    <property type="term" value="F:3'-5'-RNA exonuclease activity"/>
    <property type="evidence" value="ECO:0007669"/>
    <property type="project" value="UniProtKB-UniRule"/>
</dbReference>
<dbReference type="GO" id="GO:0003723">
    <property type="term" value="F:RNA binding"/>
    <property type="evidence" value="ECO:0007669"/>
    <property type="project" value="TreeGrafter"/>
</dbReference>
<dbReference type="GO" id="GO:0010467">
    <property type="term" value="P:gene expression"/>
    <property type="evidence" value="ECO:0007669"/>
    <property type="project" value="UniProtKB-ARBA"/>
</dbReference>
<dbReference type="GO" id="GO:0016075">
    <property type="term" value="P:rRNA catabolic process"/>
    <property type="evidence" value="ECO:0007669"/>
    <property type="project" value="TreeGrafter"/>
</dbReference>
<dbReference type="CDD" id="cd11366">
    <property type="entry name" value="RNase_PH_archRRP41"/>
    <property type="match status" value="1"/>
</dbReference>
<dbReference type="FunFam" id="3.30.230.70:FF:000004">
    <property type="entry name" value="Exosome complex component Rrp41"/>
    <property type="match status" value="1"/>
</dbReference>
<dbReference type="Gene3D" id="3.30.230.70">
    <property type="entry name" value="GHMP Kinase, N-terminal domain"/>
    <property type="match status" value="1"/>
</dbReference>
<dbReference type="HAMAP" id="MF_00591">
    <property type="entry name" value="Exosome_Rrp41"/>
    <property type="match status" value="1"/>
</dbReference>
<dbReference type="InterPro" id="IPR001247">
    <property type="entry name" value="ExoRNase_PH_dom1"/>
</dbReference>
<dbReference type="InterPro" id="IPR015847">
    <property type="entry name" value="ExoRNase_PH_dom2"/>
</dbReference>
<dbReference type="InterPro" id="IPR036345">
    <property type="entry name" value="ExoRNase_PH_dom2_sf"/>
</dbReference>
<dbReference type="InterPro" id="IPR027408">
    <property type="entry name" value="PNPase/RNase_PH_dom_sf"/>
</dbReference>
<dbReference type="InterPro" id="IPR020568">
    <property type="entry name" value="Ribosomal_Su5_D2-typ_SF"/>
</dbReference>
<dbReference type="InterPro" id="IPR050080">
    <property type="entry name" value="RNase_PH"/>
</dbReference>
<dbReference type="InterPro" id="IPR011807">
    <property type="entry name" value="Rrp41"/>
</dbReference>
<dbReference type="NCBIfam" id="TIGR02065">
    <property type="entry name" value="ECX1"/>
    <property type="match status" value="1"/>
</dbReference>
<dbReference type="PANTHER" id="PTHR11953">
    <property type="entry name" value="EXOSOME COMPLEX COMPONENT"/>
    <property type="match status" value="1"/>
</dbReference>
<dbReference type="PANTHER" id="PTHR11953:SF0">
    <property type="entry name" value="EXOSOME COMPLEX COMPONENT RRP41"/>
    <property type="match status" value="1"/>
</dbReference>
<dbReference type="Pfam" id="PF01138">
    <property type="entry name" value="RNase_PH"/>
    <property type="match status" value="1"/>
</dbReference>
<dbReference type="Pfam" id="PF03725">
    <property type="entry name" value="RNase_PH_C"/>
    <property type="match status" value="1"/>
</dbReference>
<dbReference type="SUPFAM" id="SSF55666">
    <property type="entry name" value="Ribonuclease PH domain 2-like"/>
    <property type="match status" value="1"/>
</dbReference>
<dbReference type="SUPFAM" id="SSF54211">
    <property type="entry name" value="Ribosomal protein S5 domain 2-like"/>
    <property type="match status" value="1"/>
</dbReference>
<sequence>MIKTETSKIKLINEDNLRLDGRSFNELRPIKIEAGVLNRADGSAYIEWGGNKIIVGVYGPKEAYPKHSQDIDHAVVKARYNMAAFSVDERKRPGPDRRTMEISKVISEALSSSIMIEQFPRAEIDVYIEVLQADAGTRIAGLTAATVALADAGIPMRDMVVGCTAGKVDGHIVLDLSKEEDNFGEADIPMAIMPKTGEIVLLQMDGDVTEDEFYEATSMIIEATKKISQIQRNALLNKYKIEGIEGGE</sequence>
<organism>
    <name type="scientific">Thermoplasma volcanium (strain ATCC 51530 / DSM 4299 / JCM 9571 / NBRC 15438 / GSS1)</name>
    <dbReference type="NCBI Taxonomy" id="273116"/>
    <lineage>
        <taxon>Archaea</taxon>
        <taxon>Methanobacteriati</taxon>
        <taxon>Thermoplasmatota</taxon>
        <taxon>Thermoplasmata</taxon>
        <taxon>Thermoplasmatales</taxon>
        <taxon>Thermoplasmataceae</taxon>
        <taxon>Thermoplasma</taxon>
    </lineage>
</organism>
<proteinExistence type="inferred from homology"/>